<dbReference type="EC" id="5.1.3.6"/>
<dbReference type="EMBL" id="AL080318">
    <property type="protein sequence ID" value="CAB45972.1"/>
    <property type="molecule type" value="Genomic_DNA"/>
</dbReference>
<dbReference type="EMBL" id="AL161533">
    <property type="protein sequence ID" value="CAB78268.1"/>
    <property type="molecule type" value="Genomic_DNA"/>
</dbReference>
<dbReference type="EMBL" id="CP002687">
    <property type="protein sequence ID" value="AEE83108.1"/>
    <property type="molecule type" value="Genomic_DNA"/>
</dbReference>
<dbReference type="EMBL" id="AY050993">
    <property type="protein sequence ID" value="AAK93670.1"/>
    <property type="molecule type" value="mRNA"/>
</dbReference>
<dbReference type="EMBL" id="AY150403">
    <property type="protein sequence ID" value="AAN12948.1"/>
    <property type="molecule type" value="mRNA"/>
</dbReference>
<dbReference type="PIR" id="T48135">
    <property type="entry name" value="T48135"/>
</dbReference>
<dbReference type="RefSeq" id="NP_192962.1">
    <property type="nucleotide sequence ID" value="NM_117295.4"/>
</dbReference>
<dbReference type="SMR" id="Q9STI6"/>
<dbReference type="BioGRID" id="12131">
    <property type="interactions" value="14"/>
</dbReference>
<dbReference type="FunCoup" id="Q9STI6">
    <property type="interactions" value="404"/>
</dbReference>
<dbReference type="IntAct" id="Q9STI6">
    <property type="interactions" value="14"/>
</dbReference>
<dbReference type="STRING" id="3702.Q9STI6"/>
<dbReference type="PaxDb" id="3702-AT4G12250.1"/>
<dbReference type="ProteomicsDB" id="228895"/>
<dbReference type="EnsemblPlants" id="AT4G12250.1">
    <property type="protein sequence ID" value="AT4G12250.1"/>
    <property type="gene ID" value="AT4G12250"/>
</dbReference>
<dbReference type="GeneID" id="826833"/>
<dbReference type="Gramene" id="AT4G12250.1">
    <property type="protein sequence ID" value="AT4G12250.1"/>
    <property type="gene ID" value="AT4G12250"/>
</dbReference>
<dbReference type="KEGG" id="ath:AT4G12250"/>
<dbReference type="Araport" id="AT4G12250"/>
<dbReference type="TAIR" id="AT4G12250">
    <property type="gene designation" value="GAE5"/>
</dbReference>
<dbReference type="eggNOG" id="KOG1371">
    <property type="taxonomic scope" value="Eukaryota"/>
</dbReference>
<dbReference type="HOGENOM" id="CLU_007383_1_2_1"/>
<dbReference type="InParanoid" id="Q9STI6"/>
<dbReference type="OMA" id="HCFADIT"/>
<dbReference type="OrthoDB" id="202470at2759"/>
<dbReference type="PhylomeDB" id="Q9STI6"/>
<dbReference type="BRENDA" id="5.1.3.6">
    <property type="organism ID" value="399"/>
</dbReference>
<dbReference type="PRO" id="PR:Q9STI6"/>
<dbReference type="Proteomes" id="UP000006548">
    <property type="component" value="Chromosome 4"/>
</dbReference>
<dbReference type="ExpressionAtlas" id="Q9STI6">
    <property type="expression patterns" value="baseline and differential"/>
</dbReference>
<dbReference type="GO" id="GO:0005768">
    <property type="term" value="C:endosome"/>
    <property type="evidence" value="ECO:0007005"/>
    <property type="project" value="TAIR"/>
</dbReference>
<dbReference type="GO" id="GO:0005794">
    <property type="term" value="C:Golgi apparatus"/>
    <property type="evidence" value="ECO:0007005"/>
    <property type="project" value="TAIR"/>
</dbReference>
<dbReference type="GO" id="GO:0032580">
    <property type="term" value="C:Golgi cisterna membrane"/>
    <property type="evidence" value="ECO:0007669"/>
    <property type="project" value="UniProtKB-SubCell"/>
</dbReference>
<dbReference type="GO" id="GO:0005797">
    <property type="term" value="C:Golgi medial cisterna"/>
    <property type="evidence" value="ECO:0007005"/>
    <property type="project" value="TAIR"/>
</dbReference>
<dbReference type="GO" id="GO:0005802">
    <property type="term" value="C:trans-Golgi network"/>
    <property type="evidence" value="ECO:0007005"/>
    <property type="project" value="TAIR"/>
</dbReference>
<dbReference type="GO" id="GO:0050378">
    <property type="term" value="F:UDP-glucuronate 4-epimerase activity"/>
    <property type="evidence" value="ECO:0007669"/>
    <property type="project" value="UniProtKB-EC"/>
</dbReference>
<dbReference type="FunFam" id="3.40.50.720:FF:000198">
    <property type="entry name" value="UDP-glucuronate 4-epimerase 3"/>
    <property type="match status" value="1"/>
</dbReference>
<dbReference type="Gene3D" id="3.40.50.720">
    <property type="entry name" value="NAD(P)-binding Rossmann-like Domain"/>
    <property type="match status" value="1"/>
</dbReference>
<dbReference type="InterPro" id="IPR001509">
    <property type="entry name" value="Epimerase_deHydtase"/>
</dbReference>
<dbReference type="InterPro" id="IPR036291">
    <property type="entry name" value="NAD(P)-bd_dom_sf"/>
</dbReference>
<dbReference type="PANTHER" id="PTHR43574">
    <property type="entry name" value="EPIMERASE-RELATED"/>
    <property type="match status" value="1"/>
</dbReference>
<dbReference type="Pfam" id="PF01370">
    <property type="entry name" value="Epimerase"/>
    <property type="match status" value="1"/>
</dbReference>
<dbReference type="PRINTS" id="PR01713">
    <property type="entry name" value="NUCEPIMERASE"/>
</dbReference>
<dbReference type="SUPFAM" id="SSF51735">
    <property type="entry name" value="NAD(P)-binding Rossmann-fold domains"/>
    <property type="match status" value="1"/>
</dbReference>
<evidence type="ECO:0000250" key="1"/>
<evidence type="ECO:0000255" key="2"/>
<evidence type="ECO:0000269" key="3">
    <source>
    </source>
</evidence>
<evidence type="ECO:0000269" key="4">
    <source>
    </source>
</evidence>
<evidence type="ECO:0000305" key="5"/>
<organism>
    <name type="scientific">Arabidopsis thaliana</name>
    <name type="common">Mouse-ear cress</name>
    <dbReference type="NCBI Taxonomy" id="3702"/>
    <lineage>
        <taxon>Eukaryota</taxon>
        <taxon>Viridiplantae</taxon>
        <taxon>Streptophyta</taxon>
        <taxon>Embryophyta</taxon>
        <taxon>Tracheophyta</taxon>
        <taxon>Spermatophyta</taxon>
        <taxon>Magnoliopsida</taxon>
        <taxon>eudicotyledons</taxon>
        <taxon>Gunneridae</taxon>
        <taxon>Pentapetalae</taxon>
        <taxon>rosids</taxon>
        <taxon>malvids</taxon>
        <taxon>Brassicales</taxon>
        <taxon>Brassicaceae</taxon>
        <taxon>Camelineae</taxon>
        <taxon>Arabidopsis</taxon>
    </lineage>
</organism>
<reference key="1">
    <citation type="journal article" date="1999" name="Nature">
        <title>Sequence and analysis of chromosome 4 of the plant Arabidopsis thaliana.</title>
        <authorList>
            <person name="Mayer K.F.X."/>
            <person name="Schueller C."/>
            <person name="Wambutt R."/>
            <person name="Murphy G."/>
            <person name="Volckaert G."/>
            <person name="Pohl T."/>
            <person name="Duesterhoeft A."/>
            <person name="Stiekema W."/>
            <person name="Entian K.-D."/>
            <person name="Terryn N."/>
            <person name="Harris B."/>
            <person name="Ansorge W."/>
            <person name="Brandt P."/>
            <person name="Grivell L.A."/>
            <person name="Rieger M."/>
            <person name="Weichselgartner M."/>
            <person name="de Simone V."/>
            <person name="Obermaier B."/>
            <person name="Mache R."/>
            <person name="Mueller M."/>
            <person name="Kreis M."/>
            <person name="Delseny M."/>
            <person name="Puigdomenech P."/>
            <person name="Watson M."/>
            <person name="Schmidtheini T."/>
            <person name="Reichert B."/>
            <person name="Portetelle D."/>
            <person name="Perez-Alonso M."/>
            <person name="Boutry M."/>
            <person name="Bancroft I."/>
            <person name="Vos P."/>
            <person name="Hoheisel J."/>
            <person name="Zimmermann W."/>
            <person name="Wedler H."/>
            <person name="Ridley P."/>
            <person name="Langham S.-A."/>
            <person name="McCullagh B."/>
            <person name="Bilham L."/>
            <person name="Robben J."/>
            <person name="van der Schueren J."/>
            <person name="Grymonprez B."/>
            <person name="Chuang Y.-J."/>
            <person name="Vandenbussche F."/>
            <person name="Braeken M."/>
            <person name="Weltjens I."/>
            <person name="Voet M."/>
            <person name="Bastiaens I."/>
            <person name="Aert R."/>
            <person name="Defoor E."/>
            <person name="Weitzenegger T."/>
            <person name="Bothe G."/>
            <person name="Ramsperger U."/>
            <person name="Hilbert H."/>
            <person name="Braun M."/>
            <person name="Holzer E."/>
            <person name="Brandt A."/>
            <person name="Peters S."/>
            <person name="van Staveren M."/>
            <person name="Dirkse W."/>
            <person name="Mooijman P."/>
            <person name="Klein Lankhorst R."/>
            <person name="Rose M."/>
            <person name="Hauf J."/>
            <person name="Koetter P."/>
            <person name="Berneiser S."/>
            <person name="Hempel S."/>
            <person name="Feldpausch M."/>
            <person name="Lamberth S."/>
            <person name="Van den Daele H."/>
            <person name="De Keyser A."/>
            <person name="Buysshaert C."/>
            <person name="Gielen J."/>
            <person name="Villarroel R."/>
            <person name="De Clercq R."/>
            <person name="van Montagu M."/>
            <person name="Rogers J."/>
            <person name="Cronin A."/>
            <person name="Quail M.A."/>
            <person name="Bray-Allen S."/>
            <person name="Clark L."/>
            <person name="Doggett J."/>
            <person name="Hall S."/>
            <person name="Kay M."/>
            <person name="Lennard N."/>
            <person name="McLay K."/>
            <person name="Mayes R."/>
            <person name="Pettett A."/>
            <person name="Rajandream M.A."/>
            <person name="Lyne M."/>
            <person name="Benes V."/>
            <person name="Rechmann S."/>
            <person name="Borkova D."/>
            <person name="Bloecker H."/>
            <person name="Scharfe M."/>
            <person name="Grimm M."/>
            <person name="Loehnert T.-H."/>
            <person name="Dose S."/>
            <person name="de Haan M."/>
            <person name="Maarse A.C."/>
            <person name="Schaefer M."/>
            <person name="Mueller-Auer S."/>
            <person name="Gabel C."/>
            <person name="Fuchs M."/>
            <person name="Fartmann B."/>
            <person name="Granderath K."/>
            <person name="Dauner D."/>
            <person name="Herzl A."/>
            <person name="Neumann S."/>
            <person name="Argiriou A."/>
            <person name="Vitale D."/>
            <person name="Liguori R."/>
            <person name="Piravandi E."/>
            <person name="Massenet O."/>
            <person name="Quigley F."/>
            <person name="Clabauld G."/>
            <person name="Muendlein A."/>
            <person name="Felber R."/>
            <person name="Schnabl S."/>
            <person name="Hiller R."/>
            <person name="Schmidt W."/>
            <person name="Lecharny A."/>
            <person name="Aubourg S."/>
            <person name="Chefdor F."/>
            <person name="Cooke R."/>
            <person name="Berger C."/>
            <person name="Monfort A."/>
            <person name="Casacuberta E."/>
            <person name="Gibbons T."/>
            <person name="Weber N."/>
            <person name="Vandenbol M."/>
            <person name="Bargues M."/>
            <person name="Terol J."/>
            <person name="Torres A."/>
            <person name="Perez-Perez A."/>
            <person name="Purnelle B."/>
            <person name="Bent E."/>
            <person name="Johnson S."/>
            <person name="Tacon D."/>
            <person name="Jesse T."/>
            <person name="Heijnen L."/>
            <person name="Schwarz S."/>
            <person name="Scholler P."/>
            <person name="Heber S."/>
            <person name="Francs P."/>
            <person name="Bielke C."/>
            <person name="Frishman D."/>
            <person name="Haase D."/>
            <person name="Lemcke K."/>
            <person name="Mewes H.-W."/>
            <person name="Stocker S."/>
            <person name="Zaccaria P."/>
            <person name="Bevan M."/>
            <person name="Wilson R.K."/>
            <person name="de la Bastide M."/>
            <person name="Habermann K."/>
            <person name="Parnell L."/>
            <person name="Dedhia N."/>
            <person name="Gnoj L."/>
            <person name="Schutz K."/>
            <person name="Huang E."/>
            <person name="Spiegel L."/>
            <person name="Sekhon M."/>
            <person name="Murray J."/>
            <person name="Sheet P."/>
            <person name="Cordes M."/>
            <person name="Abu-Threideh J."/>
            <person name="Stoneking T."/>
            <person name="Kalicki J."/>
            <person name="Graves T."/>
            <person name="Harmon G."/>
            <person name="Edwards J."/>
            <person name="Latreille P."/>
            <person name="Courtney L."/>
            <person name="Cloud J."/>
            <person name="Abbott A."/>
            <person name="Scott K."/>
            <person name="Johnson D."/>
            <person name="Minx P."/>
            <person name="Bentley D."/>
            <person name="Fulton B."/>
            <person name="Miller N."/>
            <person name="Greco T."/>
            <person name="Kemp K."/>
            <person name="Kramer J."/>
            <person name="Fulton L."/>
            <person name="Mardis E."/>
            <person name="Dante M."/>
            <person name="Pepin K."/>
            <person name="Hillier L.W."/>
            <person name="Nelson J."/>
            <person name="Spieth J."/>
            <person name="Ryan E."/>
            <person name="Andrews S."/>
            <person name="Geisel C."/>
            <person name="Layman D."/>
            <person name="Du H."/>
            <person name="Ali J."/>
            <person name="Berghoff A."/>
            <person name="Jones K."/>
            <person name="Drone K."/>
            <person name="Cotton M."/>
            <person name="Joshu C."/>
            <person name="Antonoiu B."/>
            <person name="Zidanic M."/>
            <person name="Strong C."/>
            <person name="Sun H."/>
            <person name="Lamar B."/>
            <person name="Yordan C."/>
            <person name="Ma P."/>
            <person name="Zhong J."/>
            <person name="Preston R."/>
            <person name="Vil D."/>
            <person name="Shekher M."/>
            <person name="Matero A."/>
            <person name="Shah R."/>
            <person name="Swaby I.K."/>
            <person name="O'Shaughnessy A."/>
            <person name="Rodriguez M."/>
            <person name="Hoffman J."/>
            <person name="Till S."/>
            <person name="Granat S."/>
            <person name="Shohdy N."/>
            <person name="Hasegawa A."/>
            <person name="Hameed A."/>
            <person name="Lodhi M."/>
            <person name="Johnson A."/>
            <person name="Chen E."/>
            <person name="Marra M.A."/>
            <person name="Martienssen R."/>
            <person name="McCombie W.R."/>
        </authorList>
    </citation>
    <scope>NUCLEOTIDE SEQUENCE [LARGE SCALE GENOMIC DNA]</scope>
    <source>
        <strain>cv. Columbia</strain>
    </source>
</reference>
<reference key="2">
    <citation type="journal article" date="2017" name="Plant J.">
        <title>Araport11: a complete reannotation of the Arabidopsis thaliana reference genome.</title>
        <authorList>
            <person name="Cheng C.Y."/>
            <person name="Krishnakumar V."/>
            <person name="Chan A.P."/>
            <person name="Thibaud-Nissen F."/>
            <person name="Schobel S."/>
            <person name="Town C.D."/>
        </authorList>
    </citation>
    <scope>GENOME REANNOTATION</scope>
    <source>
        <strain>cv. Columbia</strain>
    </source>
</reference>
<reference key="3">
    <citation type="journal article" date="2003" name="Science">
        <title>Empirical analysis of transcriptional activity in the Arabidopsis genome.</title>
        <authorList>
            <person name="Yamada K."/>
            <person name="Lim J."/>
            <person name="Dale J.M."/>
            <person name="Chen H."/>
            <person name="Shinn P."/>
            <person name="Palm C.J."/>
            <person name="Southwick A.M."/>
            <person name="Wu H.C."/>
            <person name="Kim C.J."/>
            <person name="Nguyen M."/>
            <person name="Pham P.K."/>
            <person name="Cheuk R.F."/>
            <person name="Karlin-Newmann G."/>
            <person name="Liu S.X."/>
            <person name="Lam B."/>
            <person name="Sakano H."/>
            <person name="Wu T."/>
            <person name="Yu G."/>
            <person name="Miranda M."/>
            <person name="Quach H.L."/>
            <person name="Tripp M."/>
            <person name="Chang C.H."/>
            <person name="Lee J.M."/>
            <person name="Toriumi M.J."/>
            <person name="Chan M.M."/>
            <person name="Tang C.C."/>
            <person name="Onodera C.S."/>
            <person name="Deng J.M."/>
            <person name="Akiyama K."/>
            <person name="Ansari Y."/>
            <person name="Arakawa T."/>
            <person name="Banh J."/>
            <person name="Banno F."/>
            <person name="Bowser L."/>
            <person name="Brooks S.Y."/>
            <person name="Carninci P."/>
            <person name="Chao Q."/>
            <person name="Choy N."/>
            <person name="Enju A."/>
            <person name="Goldsmith A.D."/>
            <person name="Gurjal M."/>
            <person name="Hansen N.F."/>
            <person name="Hayashizaki Y."/>
            <person name="Johnson-Hopson C."/>
            <person name="Hsuan V.W."/>
            <person name="Iida K."/>
            <person name="Karnes M."/>
            <person name="Khan S."/>
            <person name="Koesema E."/>
            <person name="Ishida J."/>
            <person name="Jiang P.X."/>
            <person name="Jones T."/>
            <person name="Kawai J."/>
            <person name="Kamiya A."/>
            <person name="Meyers C."/>
            <person name="Nakajima M."/>
            <person name="Narusaka M."/>
            <person name="Seki M."/>
            <person name="Sakurai T."/>
            <person name="Satou M."/>
            <person name="Tamse R."/>
            <person name="Vaysberg M."/>
            <person name="Wallender E.K."/>
            <person name="Wong C."/>
            <person name="Yamamura Y."/>
            <person name="Yuan S."/>
            <person name="Shinozaki K."/>
            <person name="Davis R.W."/>
            <person name="Theologis A."/>
            <person name="Ecker J.R."/>
        </authorList>
    </citation>
    <scope>NUCLEOTIDE SEQUENCE [LARGE SCALE MRNA]</scope>
    <source>
        <strain>cv. Columbia</strain>
    </source>
</reference>
<reference key="4">
    <citation type="journal article" date="2001" name="Plant Mol. Biol.">
        <title>Molecular genetics of nucleotide sugar interconversion pathways in plants.</title>
        <authorList>
            <person name="Reiter W.-D."/>
            <person name="Vanzin G.F."/>
        </authorList>
    </citation>
    <scope>IDENTIFICATION</scope>
    <scope>NOMENCLATURE</scope>
</reference>
<reference key="5">
    <citation type="journal article" date="2004" name="Plant Physiol.">
        <title>The biosynthesis of D-galacturonate in plants. Functional cloning and characterization of a membrane-anchored UDP-D-glucuronate 4-epimerase from Arabidopsis.</title>
        <authorList>
            <person name="Moelhoej M."/>
            <person name="Verma R."/>
            <person name="Reiter W.-D."/>
        </authorList>
    </citation>
    <scope>IDENTIFICATION</scope>
    <scope>TISSUE SPECIFICITY</scope>
</reference>
<reference key="6">
    <citation type="journal article" date="2004" name="FEBS Lett.">
        <title>Identification and characterization of a UDP-D-glucuronate 4-epimerase in Arabidopsis.</title>
        <authorList>
            <person name="Usadel B."/>
            <person name="Schlueter U."/>
            <person name="Moelhoej M."/>
            <person name="Gipmans M."/>
            <person name="Verma R."/>
            <person name="Kossmann J."/>
            <person name="Reiter W.-D."/>
            <person name="Pauly M."/>
        </authorList>
    </citation>
    <scope>TISSUE SPECIFICITY</scope>
</reference>
<proteinExistence type="evidence at transcript level"/>
<comment type="function">
    <text>Involved in the synthesis of the negatively charged monosaccharide that forms the backbone of pectic cell wall components.</text>
</comment>
<comment type="catalytic activity">
    <reaction>
        <text>UDP-alpha-D-glucuronate = UDP-alpha-D-galacturonate</text>
        <dbReference type="Rhea" id="RHEA:11404"/>
        <dbReference type="ChEBI" id="CHEBI:57635"/>
        <dbReference type="ChEBI" id="CHEBI:58052"/>
        <dbReference type="EC" id="5.1.3.6"/>
    </reaction>
</comment>
<comment type="subunit">
    <text evidence="1">Homodimer.</text>
</comment>
<comment type="subcellular location">
    <subcellularLocation>
        <location evidence="5">Golgi apparatus</location>
        <location evidence="5">Golgi stack membrane</location>
        <topology evidence="5">Multi-pass membrane protein</topology>
    </subcellularLocation>
</comment>
<comment type="tissue specificity">
    <text evidence="3 4">In leaves, pollen and siliques, but not in roots or flowers.</text>
</comment>
<comment type="similarity">
    <text evidence="5">Belongs to the NAD(P)-dependent epimerase/dehydratase family.</text>
</comment>
<accession>Q9STI6</accession>
<accession>Q949N3</accession>
<gene>
    <name type="primary">GAE5</name>
    <name type="ordered locus">At4g12250</name>
    <name type="ORF">T4C9.90</name>
</gene>
<sequence>MSHLDDLPSTPGKYKTDKVPPYGILHHHRYLRLSKLTLWASLFLALFLFYLVLSPPPSPSRRNLNDSSSISAAKYGGSHWEKQVRKSARPRSHGGLTVLVTGASGFVGTHVSIALRRRGDGVLGLDNFNRYYDPKLKRARQGLLERSGVFVVEGDINDAVLLRKLFDVVLFTHVMHLAAQAGVRYAMQNPGSYVNSNIAGFVNLLEVSKSANPQPAIVWASSSSVYGLNSKVPFSEKDRTDQPASLYAATKKAGEGIAHTYNHIYGLSLTGLRFFTVYGPWGRPDMAYFFFTKDILKGKTITVFESPDKGSVARDFTYIDDIVKGCLGALDTAEKSTGSGGKKKGPAMFRIYNLGNTSPVPVTKLVTILEKLLKMKAKKKIMPLPRNGDVEFTHANITLAQAELGYKPAVDLETGLKKFVKWYMGFYTGSKKKSSW</sequence>
<protein>
    <recommendedName>
        <fullName>UDP-glucuronate 4-epimerase 5</fullName>
        <ecNumber>5.1.3.6</ecNumber>
    </recommendedName>
    <alternativeName>
        <fullName>UDP-glucuronic acid epimerase 5</fullName>
    </alternativeName>
</protein>
<name>GAE5_ARATH</name>
<feature type="chain" id="PRO_0000292600" description="UDP-glucuronate 4-epimerase 5">
    <location>
        <begin position="1"/>
        <end position="436"/>
    </location>
</feature>
<feature type="transmembrane region" description="Helical" evidence="2">
    <location>
        <begin position="36"/>
        <end position="56"/>
    </location>
</feature>
<feature type="transmembrane region" description="Helical" evidence="2">
    <location>
        <begin position="95"/>
        <end position="115"/>
    </location>
</feature>
<feature type="active site" description="Proton acceptor" evidence="1">
    <location>
        <position position="247"/>
    </location>
</feature>
<feature type="binding site" evidence="1">
    <location>
        <begin position="97"/>
        <end position="128"/>
    </location>
    <ligand>
        <name>NAD(+)</name>
        <dbReference type="ChEBI" id="CHEBI:57540"/>
    </ligand>
</feature>
<feature type="sequence conflict" description="In Ref. 3; AAK93670." evidence="5" ref="3">
    <original>R</original>
    <variation>Q</variation>
    <location>
        <position position="116"/>
    </location>
</feature>
<keyword id="KW-0119">Carbohydrate metabolism</keyword>
<keyword id="KW-0333">Golgi apparatus</keyword>
<keyword id="KW-0413">Isomerase</keyword>
<keyword id="KW-0472">Membrane</keyword>
<keyword id="KW-0520">NAD</keyword>
<keyword id="KW-1185">Reference proteome</keyword>
<keyword id="KW-0812">Transmembrane</keyword>
<keyword id="KW-1133">Transmembrane helix</keyword>